<comment type="function">
    <text evidence="1">Catalyzes the NAD(P)-dependent oxidation of 4-(phosphooxy)-L-threonine (HTP) into 2-amino-3-oxo-4-(phosphooxy)butyric acid which spontaneously decarboxylates to form 3-amino-2-oxopropyl phosphate (AHAP).</text>
</comment>
<comment type="catalytic activity">
    <reaction evidence="1">
        <text>4-(phosphooxy)-L-threonine + NAD(+) = 3-amino-2-oxopropyl phosphate + CO2 + NADH</text>
        <dbReference type="Rhea" id="RHEA:32275"/>
        <dbReference type="ChEBI" id="CHEBI:16526"/>
        <dbReference type="ChEBI" id="CHEBI:57279"/>
        <dbReference type="ChEBI" id="CHEBI:57540"/>
        <dbReference type="ChEBI" id="CHEBI:57945"/>
        <dbReference type="ChEBI" id="CHEBI:58452"/>
        <dbReference type="EC" id="1.1.1.262"/>
    </reaction>
</comment>
<comment type="cofactor">
    <cofactor evidence="1">
        <name>Zn(2+)</name>
        <dbReference type="ChEBI" id="CHEBI:29105"/>
    </cofactor>
    <cofactor evidence="1">
        <name>Mg(2+)</name>
        <dbReference type="ChEBI" id="CHEBI:18420"/>
    </cofactor>
    <cofactor evidence="1">
        <name>Co(2+)</name>
        <dbReference type="ChEBI" id="CHEBI:48828"/>
    </cofactor>
    <text evidence="1">Binds 1 divalent metal cation per subunit. Can use ions such as Zn(2+), Mg(2+) or Co(2+).</text>
</comment>
<comment type="pathway">
    <text evidence="1">Cofactor biosynthesis; pyridoxine 5'-phosphate biosynthesis; pyridoxine 5'-phosphate from D-erythrose 4-phosphate: step 4/5.</text>
</comment>
<comment type="subunit">
    <text evidence="1">Homodimer.</text>
</comment>
<comment type="subcellular location">
    <subcellularLocation>
        <location evidence="1">Cytoplasm</location>
    </subcellularLocation>
</comment>
<comment type="miscellaneous">
    <text evidence="1">The active site is located at the dimer interface.</text>
</comment>
<comment type="similarity">
    <text evidence="2">Belongs to the PdxA family.</text>
</comment>
<feature type="chain" id="PRO_0000188814" description="Putative 4-hydroxythreonine-4-phosphate dehydrogenase">
    <location>
        <begin position="1"/>
        <end position="337"/>
    </location>
</feature>
<feature type="binding site" evidence="1">
    <location>
        <position position="172"/>
    </location>
    <ligand>
        <name>a divalent metal cation</name>
        <dbReference type="ChEBI" id="CHEBI:60240"/>
        <note>ligand shared between dimeric partners</note>
    </ligand>
</feature>
<feature type="binding site" evidence="1">
    <location>
        <position position="216"/>
    </location>
    <ligand>
        <name>a divalent metal cation</name>
        <dbReference type="ChEBI" id="CHEBI:60240"/>
        <note>ligand shared between dimeric partners</note>
    </ligand>
</feature>
<feature type="binding site" evidence="1">
    <location>
        <position position="271"/>
    </location>
    <ligand>
        <name>a divalent metal cation</name>
        <dbReference type="ChEBI" id="CHEBI:60240"/>
        <note>ligand shared between dimeric partners</note>
    </ligand>
</feature>
<gene>
    <name type="ordered locus">PM1650</name>
</gene>
<organism>
    <name type="scientific">Pasteurella multocida (strain Pm70)</name>
    <dbReference type="NCBI Taxonomy" id="272843"/>
    <lineage>
        <taxon>Bacteria</taxon>
        <taxon>Pseudomonadati</taxon>
        <taxon>Pseudomonadota</taxon>
        <taxon>Gammaproteobacteria</taxon>
        <taxon>Pasteurellales</taxon>
        <taxon>Pasteurellaceae</taxon>
        <taxon>Pasteurella</taxon>
    </lineage>
</organism>
<reference key="1">
    <citation type="journal article" date="2001" name="Proc. Natl. Acad. Sci. U.S.A.">
        <title>Complete genomic sequence of Pasteurella multocida Pm70.</title>
        <authorList>
            <person name="May B.J."/>
            <person name="Zhang Q."/>
            <person name="Li L.L."/>
            <person name="Paustian M.L."/>
            <person name="Whittam T.S."/>
            <person name="Kapur V."/>
        </authorList>
    </citation>
    <scope>NUCLEOTIDE SEQUENCE [LARGE SCALE GENOMIC DNA]</scope>
    <source>
        <strain>Pm70</strain>
    </source>
</reference>
<sequence>MTKSTVALTLGDPAGIGPELVAKLLAKQNIREKANIVLVADKDELEKGMEIAKAQFVYEEVSFHQLGQYEFKTGVPVLISHKSSHPKPFEYGKVTEQSGVYILETLKVALNLAKMGYVQAICFAPLNKQAMHKGGLRYRDELHWFAEQTDFNEFVCELNVVDDIWAARVTSHIPFKDIVPNLSIKGVFDCIHLLYRSLVQAGVENPKIAVQALNPHGGEGGVFGDEEMTIIQPGMEQARKAGIDVYGPFPGDTTMREVERLKINGVVSMYHDQFSTALKILGFERGVTVQGGIPIPITTANHGTAFDLHGKNIAIPTAFEAAFNIAVRMGQGVLNQK</sequence>
<protein>
    <recommendedName>
        <fullName evidence="1">Putative 4-hydroxythreonine-4-phosphate dehydrogenase</fullName>
        <ecNumber evidence="1">1.1.1.262</ecNumber>
    </recommendedName>
    <alternativeName>
        <fullName evidence="1">4-(phosphohydroxy)-L-threonine dehydrogenase</fullName>
    </alternativeName>
</protein>
<proteinExistence type="inferred from homology"/>
<accession>Q9CKG8</accession>
<dbReference type="EC" id="1.1.1.262" evidence="1"/>
<dbReference type="EMBL" id="AE004439">
    <property type="protein sequence ID" value="AAK03734.1"/>
    <property type="molecule type" value="Genomic_DNA"/>
</dbReference>
<dbReference type="RefSeq" id="WP_005718533.1">
    <property type="nucleotide sequence ID" value="NC_002663.1"/>
</dbReference>
<dbReference type="SMR" id="Q9CKG8"/>
<dbReference type="STRING" id="272843.PM1650"/>
<dbReference type="EnsemblBacteria" id="AAK03734">
    <property type="protein sequence ID" value="AAK03734"/>
    <property type="gene ID" value="PM1650"/>
</dbReference>
<dbReference type="KEGG" id="pmu:PM1650"/>
<dbReference type="HOGENOM" id="CLU_040168_0_1_6"/>
<dbReference type="OrthoDB" id="9801783at2"/>
<dbReference type="UniPathway" id="UPA00244">
    <property type="reaction ID" value="UER00312"/>
</dbReference>
<dbReference type="Proteomes" id="UP000000809">
    <property type="component" value="Chromosome"/>
</dbReference>
<dbReference type="GO" id="GO:0005737">
    <property type="term" value="C:cytoplasm"/>
    <property type="evidence" value="ECO:0007669"/>
    <property type="project" value="UniProtKB-SubCell"/>
</dbReference>
<dbReference type="GO" id="GO:0050570">
    <property type="term" value="F:4-hydroxythreonine-4-phosphate dehydrogenase activity"/>
    <property type="evidence" value="ECO:0007669"/>
    <property type="project" value="UniProtKB-EC"/>
</dbReference>
<dbReference type="GO" id="GO:0046872">
    <property type="term" value="F:metal ion binding"/>
    <property type="evidence" value="ECO:0007669"/>
    <property type="project" value="UniProtKB-KW"/>
</dbReference>
<dbReference type="GO" id="GO:0051287">
    <property type="term" value="F:NAD binding"/>
    <property type="evidence" value="ECO:0007669"/>
    <property type="project" value="InterPro"/>
</dbReference>
<dbReference type="GO" id="GO:0008615">
    <property type="term" value="P:pyridoxine biosynthetic process"/>
    <property type="evidence" value="ECO:0007669"/>
    <property type="project" value="UniProtKB-KW"/>
</dbReference>
<dbReference type="Gene3D" id="3.40.718.10">
    <property type="entry name" value="Isopropylmalate Dehydrogenase"/>
    <property type="match status" value="1"/>
</dbReference>
<dbReference type="InterPro" id="IPR005255">
    <property type="entry name" value="PdxA_fam"/>
</dbReference>
<dbReference type="PANTHER" id="PTHR30004">
    <property type="entry name" value="4-HYDROXYTHREONINE-4-PHOSPHATE DEHYDROGENASE"/>
    <property type="match status" value="1"/>
</dbReference>
<dbReference type="PANTHER" id="PTHR30004:SF3">
    <property type="entry name" value="4-HYDROXYTHREONINE-4-PHOSPHATE DEHYDROGENASE 2-RELATED"/>
    <property type="match status" value="1"/>
</dbReference>
<dbReference type="Pfam" id="PF04166">
    <property type="entry name" value="PdxA"/>
    <property type="match status" value="1"/>
</dbReference>
<dbReference type="SUPFAM" id="SSF53659">
    <property type="entry name" value="Isocitrate/Isopropylmalate dehydrogenase-like"/>
    <property type="match status" value="1"/>
</dbReference>
<keyword id="KW-0170">Cobalt</keyword>
<keyword id="KW-0963">Cytoplasm</keyword>
<keyword id="KW-0460">Magnesium</keyword>
<keyword id="KW-0479">Metal-binding</keyword>
<keyword id="KW-0520">NAD</keyword>
<keyword id="KW-0521">NADP</keyword>
<keyword id="KW-0560">Oxidoreductase</keyword>
<keyword id="KW-0664">Pyridoxine biosynthesis</keyword>
<keyword id="KW-1185">Reference proteome</keyword>
<keyword id="KW-0862">Zinc</keyword>
<name>PDXAL_PASMU</name>
<evidence type="ECO:0000250" key="1">
    <source>
        <dbReference type="UniProtKB" id="P19624"/>
    </source>
</evidence>
<evidence type="ECO:0000305" key="2"/>